<evidence type="ECO:0000255" key="1">
    <source>
        <dbReference type="HAMAP-Rule" id="MF_04129"/>
    </source>
</evidence>
<protein>
    <recommendedName>
        <fullName evidence="1">Intermediate capsid protein VP6</fullName>
    </recommendedName>
</protein>
<organism>
    <name type="scientific">Rotavirus A (strain RVA/Pig/Mexico/YM/1983/G11P9[7])</name>
    <name type="common">RV-A</name>
    <dbReference type="NCBI Taxonomy" id="10919"/>
    <lineage>
        <taxon>Viruses</taxon>
        <taxon>Riboviria</taxon>
        <taxon>Orthornavirae</taxon>
        <taxon>Duplornaviricota</taxon>
        <taxon>Resentoviricetes</taxon>
        <taxon>Reovirales</taxon>
        <taxon>Sedoreoviridae</taxon>
        <taxon>Rotavirus</taxon>
        <taxon>Rotavirus A</taxon>
    </lineage>
</organism>
<comment type="function">
    <text evidence="1">Intermediate capsid protein that self assembles to form an icosahedral capsid with a T=13 symmetry, which consists of 230 trimers of VP6, with channels at each of its five-fold vertices. This capsid constitutes the middle concentric layer of the viral mature particle. The innermost VP2 capsid and the intermediate VP6 capsid remain intact following cell entry to protect the dsRNA from degradation and to prevent unfavorable antiviral responses in the host cell during all the replication cycle of the virus. Nascent transcripts are transcribed within the structural confines of this double-layered particle (DLP) and are extruded through the channels at the five-fold axes. VP6 is required for the transcription activity of the DLP.</text>
</comment>
<comment type="subunit">
    <text evidence="1">Homotrimer. Interacts with the inner capsid protein VP2. Interacts with the outer capsid glycoprotein VP7. Interacts with the outer capsid protein VP5*.</text>
</comment>
<comment type="subcellular location">
    <subcellularLocation>
        <location evidence="1">Virion</location>
    </subcellularLocation>
    <text evidence="1">Component of the intermediate capsid. Also found in spherical cytoplasmic structures, called virus factories, that appear early after infection and are the site of viral replication and packaging.</text>
</comment>
<comment type="PTM">
    <text evidence="1">The N-terminus is blocked.</text>
</comment>
<comment type="PTM">
    <text evidence="1">Sumoylated with SUMO1 and SUMO2. Sumoylation of viral proteins seems to have a positive role on viral replication.</text>
</comment>
<comment type="miscellaneous">
    <text evidence="1">The VP6 trimer contains a zinc ion located at the center of the molecule. The zinc ion is not essential for either trimerization or transcription activity of the DLP. Zinc-depleted VP6 has an increased sensitivity to proteases.</text>
</comment>
<comment type="similarity">
    <text evidence="1">Belongs to the rotavirus VP6 family.</text>
</comment>
<reference key="1">
    <citation type="journal article" date="1993" name="J. Gen. Virol.">
        <title>Sequence analysis of rotavirus YM VP6 and NS28 proteins.</title>
        <authorList>
            <person name="Lopez S."/>
            <person name="Arias C.F."/>
        </authorList>
    </citation>
    <scope>NUCLEOTIDE SEQUENCE [MRNA]</scope>
</reference>
<dbReference type="EMBL" id="X69487">
    <property type="protein sequence ID" value="CAA49243.1"/>
    <property type="molecule type" value="mRNA"/>
</dbReference>
<dbReference type="SMR" id="Q06386"/>
<dbReference type="GO" id="GO:0019031">
    <property type="term" value="C:viral envelope"/>
    <property type="evidence" value="ECO:0007669"/>
    <property type="project" value="UniProtKB-UniRule"/>
</dbReference>
<dbReference type="GO" id="GO:0039626">
    <property type="term" value="C:viral intermediate capsid"/>
    <property type="evidence" value="ECO:0007669"/>
    <property type="project" value="UniProtKB-UniRule"/>
</dbReference>
<dbReference type="GO" id="GO:0046789">
    <property type="term" value="F:host cell surface receptor binding"/>
    <property type="evidence" value="ECO:0007669"/>
    <property type="project" value="UniProtKB-UniRule"/>
</dbReference>
<dbReference type="GO" id="GO:0046872">
    <property type="term" value="F:metal ion binding"/>
    <property type="evidence" value="ECO:0007669"/>
    <property type="project" value="UniProtKB-UniRule"/>
</dbReference>
<dbReference type="GO" id="GO:0005198">
    <property type="term" value="F:structural molecule activity"/>
    <property type="evidence" value="ECO:0007669"/>
    <property type="project" value="UniProtKB-UniRule"/>
</dbReference>
<dbReference type="GO" id="GO:0019064">
    <property type="term" value="P:fusion of virus membrane with host plasma membrane"/>
    <property type="evidence" value="ECO:0007669"/>
    <property type="project" value="UniProtKB-UniRule"/>
</dbReference>
<dbReference type="Gene3D" id="2.60.120.170">
    <property type="match status" value="1"/>
</dbReference>
<dbReference type="Gene3D" id="1.10.1350.10">
    <property type="entry name" value="Viral capsid alpha domain"/>
    <property type="match status" value="1"/>
</dbReference>
<dbReference type="HAMAP" id="MF_04126">
    <property type="entry name" value="Rota_VP6"/>
    <property type="match status" value="1"/>
</dbReference>
<dbReference type="HAMAP" id="MF_04129">
    <property type="entry name" value="Rota_VP6_A"/>
    <property type="match status" value="1"/>
</dbReference>
<dbReference type="InterPro" id="IPR008980">
    <property type="entry name" value="Capsid_hemagglutn"/>
</dbReference>
<dbReference type="InterPro" id="IPR001385">
    <property type="entry name" value="Rotavirus_A/C_VP6"/>
</dbReference>
<dbReference type="InterPro" id="IPR008935">
    <property type="entry name" value="Virus_capsid_a-hlx_vir"/>
</dbReference>
<dbReference type="Pfam" id="PF00980">
    <property type="entry name" value="Rota_Capsid_VP6"/>
    <property type="match status" value="1"/>
</dbReference>
<dbReference type="SUPFAM" id="SSF48345">
    <property type="entry name" value="A virus capsid protein alpha-helical domain"/>
    <property type="match status" value="1"/>
</dbReference>
<dbReference type="SUPFAM" id="SSF49818">
    <property type="entry name" value="Viral protein domain"/>
    <property type="match status" value="1"/>
</dbReference>
<accession>Q06386</accession>
<organismHost>
    <name type="scientific">Sus scrofa</name>
    <name type="common">Pig</name>
    <dbReference type="NCBI Taxonomy" id="9823"/>
</organismHost>
<keyword id="KW-0106">Calcium</keyword>
<keyword id="KW-0167">Capsid protein</keyword>
<keyword id="KW-1154">Intermediate capsid protein</keyword>
<keyword id="KW-0479">Metal-binding</keyword>
<keyword id="KW-0832">Ubl conjugation</keyword>
<keyword id="KW-0946">Virion</keyword>
<keyword id="KW-0862">Zinc</keyword>
<feature type="chain" id="PRO_0000149576" description="Intermediate capsid protein VP6">
    <location>
        <begin position="1"/>
        <end position="397"/>
    </location>
</feature>
<feature type="region of interest" description="Interaction with the inner capsid protein VP2" evidence="1">
    <location>
        <begin position="62"/>
        <end position="73"/>
    </location>
</feature>
<feature type="binding site" evidence="1">
    <location>
        <position position="153"/>
    </location>
    <ligand>
        <name>Zn(2+)</name>
        <dbReference type="ChEBI" id="CHEBI:29105"/>
        <note>ligand shared between all trimeric partners</note>
    </ligand>
</feature>
<feature type="binding site" evidence="1">
    <location>
        <position position="266"/>
    </location>
    <ligand>
        <name>Ca(2+)</name>
        <dbReference type="ChEBI" id="CHEBI:29108"/>
    </ligand>
</feature>
<feature type="binding site" evidence="1">
    <location>
        <position position="286"/>
    </location>
    <ligand>
        <name>Ca(2+)</name>
        <dbReference type="ChEBI" id="CHEBI:29108"/>
    </ligand>
</feature>
<sequence>MEVLYSLSKTLKDARDKIVEGTLYSNVSDLIQQFNQMIVTMNGNDFQTGGIGNLPIRNWTFDFGLLGTTLLNLDANYVENARTTIEYFIDFIDNVCMDEIARESQRNGIAPQSEALRKLSGIKFKRINFDNSSDYIENWNLQNRRHGTGFVFHKPNILPYSASFTLNRSQPAHDNLMGTMWINAGSEIQVAGFDYSCAFNAPANIQQFEHVVPLRRALTTATITLLPDAERFSFPRVINSADGTTTWYFNPVILRPSNVEVEFLLNGQIINTYQARFGTIIARNFDTIRLSFQLVRPPNMTPAVANLFPQAPPFIFHATVGLTLRIESAVCESVLADASETLLANVTSVRQEYAIPVGPVFPPGMNWTELITNYSPSREDNLQRVFTVASIRSMLIK</sequence>
<name>VP6_ROTPY</name>
<proteinExistence type="evidence at transcript level"/>